<organism>
    <name type="scientific">Danio rerio</name>
    <name type="common">Zebrafish</name>
    <name type="synonym">Brachydanio rerio</name>
    <dbReference type="NCBI Taxonomy" id="7955"/>
    <lineage>
        <taxon>Eukaryota</taxon>
        <taxon>Metazoa</taxon>
        <taxon>Chordata</taxon>
        <taxon>Craniata</taxon>
        <taxon>Vertebrata</taxon>
        <taxon>Euteleostomi</taxon>
        <taxon>Actinopterygii</taxon>
        <taxon>Neopterygii</taxon>
        <taxon>Teleostei</taxon>
        <taxon>Ostariophysi</taxon>
        <taxon>Cypriniformes</taxon>
        <taxon>Danionidae</taxon>
        <taxon>Danioninae</taxon>
        <taxon>Danio</taxon>
    </lineage>
</organism>
<comment type="function">
    <text evidence="1">Required for ciliation. Recruits the RABL2B GTPase to the ciliary base to initiate ciliation.</text>
</comment>
<comment type="subcellular location">
    <subcellularLocation>
        <location evidence="1">Cytoplasm</location>
        <location evidence="1">Cytoskeleton</location>
        <location evidence="1">Microtubule organizing center</location>
        <location evidence="1">Centrosome</location>
        <location evidence="1">Centriole</location>
    </subcellularLocation>
    <subcellularLocation>
        <location evidence="1">Cytoplasm</location>
        <location evidence="1">Cytoskeleton</location>
        <location evidence="1">Spindle pole</location>
    </subcellularLocation>
    <subcellularLocation>
        <location evidence="1">Cytoplasm</location>
        <location evidence="1">Cytoskeleton</location>
        <location evidence="1">Cilium basal body</location>
    </subcellularLocation>
    <text evidence="1">Associates with the mother centriole in early interphase. Localizes to spindle poles during mitosis, and to distinct foci oriented towards the midbody at telophase. Localizes slightly apical to the subdistal appendage on the mother centriole, but below the distal appendage.</text>
</comment>
<comment type="similarity">
    <text evidence="3">Belongs to the CEP19 family.</text>
</comment>
<feature type="chain" id="PRO_0000360404" description="Centrosomal protein of 19 kDa">
    <location>
        <begin position="1"/>
        <end position="161"/>
    </location>
</feature>
<feature type="region of interest" description="Disordered" evidence="2">
    <location>
        <begin position="89"/>
        <end position="110"/>
    </location>
</feature>
<feature type="compositionally biased region" description="Basic and acidic residues" evidence="2">
    <location>
        <begin position="90"/>
        <end position="110"/>
    </location>
</feature>
<name>CEP19_DANRE</name>
<accession>Q4V8Z3</accession>
<gene>
    <name type="primary">cep19</name>
    <name type="ORF">si:ch73-159l23.3</name>
    <name type="ORF">zgc:114076</name>
</gene>
<proteinExistence type="evidence at transcript level"/>
<protein>
    <recommendedName>
        <fullName>Centrosomal protein of 19 kDa</fullName>
        <shortName>Cep19</shortName>
    </recommendedName>
</protein>
<dbReference type="EMBL" id="CT027565">
    <property type="protein sequence ID" value="CAN87995.1"/>
    <property type="molecule type" value="Genomic_DNA"/>
</dbReference>
<dbReference type="EMBL" id="BC097138">
    <property type="protein sequence ID" value="AAH97138.1"/>
    <property type="molecule type" value="mRNA"/>
</dbReference>
<dbReference type="RefSeq" id="NP_001028906.1">
    <property type="nucleotide sequence ID" value="NM_001033734.1"/>
</dbReference>
<dbReference type="RefSeq" id="XP_068072466.1">
    <property type="nucleotide sequence ID" value="XM_068216365.1"/>
</dbReference>
<dbReference type="FunCoup" id="Q4V8Z3">
    <property type="interactions" value="132"/>
</dbReference>
<dbReference type="STRING" id="7955.ENSDARP00000122139"/>
<dbReference type="PaxDb" id="7955-ENSDARP00000122139"/>
<dbReference type="Ensembl" id="ENSDART00000082222">
    <property type="protein sequence ID" value="ENSDARP00000076659"/>
    <property type="gene ID" value="ENSDARG00000059175"/>
</dbReference>
<dbReference type="Ensembl" id="ENSDART00000135507">
    <property type="protein sequence ID" value="ENSDARP00000122139"/>
    <property type="gene ID" value="ENSDARG00000059175"/>
</dbReference>
<dbReference type="Ensembl" id="ENSDART00000143258">
    <property type="protein sequence ID" value="ENSDARP00000117048"/>
    <property type="gene ID" value="ENSDARG00000059175"/>
</dbReference>
<dbReference type="GeneID" id="619252"/>
<dbReference type="KEGG" id="dre:619252"/>
<dbReference type="AGR" id="ZFIN:ZDB-GENE-050913-81"/>
<dbReference type="CTD" id="84984"/>
<dbReference type="ZFIN" id="ZDB-GENE-050913-81">
    <property type="gene designation" value="cep19"/>
</dbReference>
<dbReference type="eggNOG" id="ENOG502RZP1">
    <property type="taxonomic scope" value="Eukaryota"/>
</dbReference>
<dbReference type="HOGENOM" id="CLU_113348_0_0_1"/>
<dbReference type="InParanoid" id="Q4V8Z3"/>
<dbReference type="OMA" id="AKKCGIQ"/>
<dbReference type="OrthoDB" id="2163581at2759"/>
<dbReference type="PhylomeDB" id="Q4V8Z3"/>
<dbReference type="TreeFam" id="TF328425"/>
<dbReference type="PRO" id="PR:Q4V8Z3"/>
<dbReference type="Proteomes" id="UP000000437">
    <property type="component" value="Chromosome 22"/>
</dbReference>
<dbReference type="Bgee" id="ENSDARG00000059175">
    <property type="expression patterns" value="Expressed in testis and 20 other cell types or tissues"/>
</dbReference>
<dbReference type="GO" id="GO:0005814">
    <property type="term" value="C:centriole"/>
    <property type="evidence" value="ECO:0000250"/>
    <property type="project" value="UniProtKB"/>
</dbReference>
<dbReference type="GO" id="GO:0005813">
    <property type="term" value="C:centrosome"/>
    <property type="evidence" value="ECO:0000318"/>
    <property type="project" value="GO_Central"/>
</dbReference>
<dbReference type="GO" id="GO:0036064">
    <property type="term" value="C:ciliary basal body"/>
    <property type="evidence" value="ECO:0000250"/>
    <property type="project" value="UniProtKB"/>
</dbReference>
<dbReference type="GO" id="GO:0005737">
    <property type="term" value="C:cytoplasm"/>
    <property type="evidence" value="ECO:0007669"/>
    <property type="project" value="UniProtKB-KW"/>
</dbReference>
<dbReference type="GO" id="GO:0000922">
    <property type="term" value="C:spindle pole"/>
    <property type="evidence" value="ECO:0000250"/>
    <property type="project" value="UniProtKB"/>
</dbReference>
<dbReference type="GO" id="GO:0060271">
    <property type="term" value="P:cilium assembly"/>
    <property type="evidence" value="ECO:0000250"/>
    <property type="project" value="UniProtKB"/>
</dbReference>
<dbReference type="GO" id="GO:0034454">
    <property type="term" value="P:microtubule anchoring at centrosome"/>
    <property type="evidence" value="ECO:0000318"/>
    <property type="project" value="GO_Central"/>
</dbReference>
<dbReference type="GO" id="GO:0097712">
    <property type="term" value="P:vesicle targeting, trans-Golgi to periciliary membrane compartment"/>
    <property type="evidence" value="ECO:0000318"/>
    <property type="project" value="GO_Central"/>
</dbReference>
<dbReference type="InterPro" id="IPR029412">
    <property type="entry name" value="CEP19"/>
</dbReference>
<dbReference type="PANTHER" id="PTHR31539:SF1">
    <property type="entry name" value="CENTROSOMAL PROTEIN OF 19 KDA"/>
    <property type="match status" value="1"/>
</dbReference>
<dbReference type="PANTHER" id="PTHR31539">
    <property type="entry name" value="CENTROSOMAL PROTEIN OF 19K CEP19"/>
    <property type="match status" value="1"/>
</dbReference>
<dbReference type="Pfam" id="PF14933">
    <property type="entry name" value="CEP19"/>
    <property type="match status" value="1"/>
</dbReference>
<evidence type="ECO:0000250" key="1">
    <source>
        <dbReference type="UniProtKB" id="Q96LK0"/>
    </source>
</evidence>
<evidence type="ECO:0000256" key="2">
    <source>
        <dbReference type="SAM" id="MobiDB-lite"/>
    </source>
</evidence>
<evidence type="ECO:0000305" key="3"/>
<sequence>MSIVAKRCGVKFTPPSIIIIYENKTSGKMRKRVIPVRNFSQYSDCSRAAERLKHHVRHSVYLECVSLAQLERLHLLLRDHLQGASLEESLAAHRHQEEEEDLNKLSDEELSRRKAQMDDLFQRNRRRRGDPDFVYDLEVEFGEGSVKETCSWDEEQSDQEF</sequence>
<reference key="1">
    <citation type="journal article" date="2013" name="Nature">
        <title>The zebrafish reference genome sequence and its relationship to the human genome.</title>
        <authorList>
            <person name="Howe K."/>
            <person name="Clark M.D."/>
            <person name="Torroja C.F."/>
            <person name="Torrance J."/>
            <person name="Berthelot C."/>
            <person name="Muffato M."/>
            <person name="Collins J.E."/>
            <person name="Humphray S."/>
            <person name="McLaren K."/>
            <person name="Matthews L."/>
            <person name="McLaren S."/>
            <person name="Sealy I."/>
            <person name="Caccamo M."/>
            <person name="Churcher C."/>
            <person name="Scott C."/>
            <person name="Barrett J.C."/>
            <person name="Koch R."/>
            <person name="Rauch G.J."/>
            <person name="White S."/>
            <person name="Chow W."/>
            <person name="Kilian B."/>
            <person name="Quintais L.T."/>
            <person name="Guerra-Assuncao J.A."/>
            <person name="Zhou Y."/>
            <person name="Gu Y."/>
            <person name="Yen J."/>
            <person name="Vogel J.H."/>
            <person name="Eyre T."/>
            <person name="Redmond S."/>
            <person name="Banerjee R."/>
            <person name="Chi J."/>
            <person name="Fu B."/>
            <person name="Langley E."/>
            <person name="Maguire S.F."/>
            <person name="Laird G.K."/>
            <person name="Lloyd D."/>
            <person name="Kenyon E."/>
            <person name="Donaldson S."/>
            <person name="Sehra H."/>
            <person name="Almeida-King J."/>
            <person name="Loveland J."/>
            <person name="Trevanion S."/>
            <person name="Jones M."/>
            <person name="Quail M."/>
            <person name="Willey D."/>
            <person name="Hunt A."/>
            <person name="Burton J."/>
            <person name="Sims S."/>
            <person name="McLay K."/>
            <person name="Plumb B."/>
            <person name="Davis J."/>
            <person name="Clee C."/>
            <person name="Oliver K."/>
            <person name="Clark R."/>
            <person name="Riddle C."/>
            <person name="Elliot D."/>
            <person name="Threadgold G."/>
            <person name="Harden G."/>
            <person name="Ware D."/>
            <person name="Begum S."/>
            <person name="Mortimore B."/>
            <person name="Kerry G."/>
            <person name="Heath P."/>
            <person name="Phillimore B."/>
            <person name="Tracey A."/>
            <person name="Corby N."/>
            <person name="Dunn M."/>
            <person name="Johnson C."/>
            <person name="Wood J."/>
            <person name="Clark S."/>
            <person name="Pelan S."/>
            <person name="Griffiths G."/>
            <person name="Smith M."/>
            <person name="Glithero R."/>
            <person name="Howden P."/>
            <person name="Barker N."/>
            <person name="Lloyd C."/>
            <person name="Stevens C."/>
            <person name="Harley J."/>
            <person name="Holt K."/>
            <person name="Panagiotidis G."/>
            <person name="Lovell J."/>
            <person name="Beasley H."/>
            <person name="Henderson C."/>
            <person name="Gordon D."/>
            <person name="Auger K."/>
            <person name="Wright D."/>
            <person name="Collins J."/>
            <person name="Raisen C."/>
            <person name="Dyer L."/>
            <person name="Leung K."/>
            <person name="Robertson L."/>
            <person name="Ambridge K."/>
            <person name="Leongamornlert D."/>
            <person name="McGuire S."/>
            <person name="Gilderthorp R."/>
            <person name="Griffiths C."/>
            <person name="Manthravadi D."/>
            <person name="Nichol S."/>
            <person name="Barker G."/>
            <person name="Whitehead S."/>
            <person name="Kay M."/>
            <person name="Brown J."/>
            <person name="Murnane C."/>
            <person name="Gray E."/>
            <person name="Humphries M."/>
            <person name="Sycamore N."/>
            <person name="Barker D."/>
            <person name="Saunders D."/>
            <person name="Wallis J."/>
            <person name="Babbage A."/>
            <person name="Hammond S."/>
            <person name="Mashreghi-Mohammadi M."/>
            <person name="Barr L."/>
            <person name="Martin S."/>
            <person name="Wray P."/>
            <person name="Ellington A."/>
            <person name="Matthews N."/>
            <person name="Ellwood M."/>
            <person name="Woodmansey R."/>
            <person name="Clark G."/>
            <person name="Cooper J."/>
            <person name="Tromans A."/>
            <person name="Grafham D."/>
            <person name="Skuce C."/>
            <person name="Pandian R."/>
            <person name="Andrews R."/>
            <person name="Harrison E."/>
            <person name="Kimberley A."/>
            <person name="Garnett J."/>
            <person name="Fosker N."/>
            <person name="Hall R."/>
            <person name="Garner P."/>
            <person name="Kelly D."/>
            <person name="Bird C."/>
            <person name="Palmer S."/>
            <person name="Gehring I."/>
            <person name="Berger A."/>
            <person name="Dooley C.M."/>
            <person name="Ersan-Urun Z."/>
            <person name="Eser C."/>
            <person name="Geiger H."/>
            <person name="Geisler M."/>
            <person name="Karotki L."/>
            <person name="Kirn A."/>
            <person name="Konantz J."/>
            <person name="Konantz M."/>
            <person name="Oberlander M."/>
            <person name="Rudolph-Geiger S."/>
            <person name="Teucke M."/>
            <person name="Lanz C."/>
            <person name="Raddatz G."/>
            <person name="Osoegawa K."/>
            <person name="Zhu B."/>
            <person name="Rapp A."/>
            <person name="Widaa S."/>
            <person name="Langford C."/>
            <person name="Yang F."/>
            <person name="Schuster S.C."/>
            <person name="Carter N.P."/>
            <person name="Harrow J."/>
            <person name="Ning Z."/>
            <person name="Herrero J."/>
            <person name="Searle S.M."/>
            <person name="Enright A."/>
            <person name="Geisler R."/>
            <person name="Plasterk R.H."/>
            <person name="Lee C."/>
            <person name="Westerfield M."/>
            <person name="de Jong P.J."/>
            <person name="Zon L.I."/>
            <person name="Postlethwait J.H."/>
            <person name="Nusslein-Volhard C."/>
            <person name="Hubbard T.J."/>
            <person name="Roest Crollius H."/>
            <person name="Rogers J."/>
            <person name="Stemple D.L."/>
        </authorList>
    </citation>
    <scope>NUCLEOTIDE SEQUENCE [LARGE SCALE GENOMIC DNA]</scope>
    <source>
        <strain>Tuebingen</strain>
    </source>
</reference>
<reference key="2">
    <citation type="submission" date="2005-06" db="EMBL/GenBank/DDBJ databases">
        <authorList>
            <consortium name="NIH - Zebrafish Gene Collection (ZGC) project"/>
        </authorList>
    </citation>
    <scope>NUCLEOTIDE SEQUENCE [LARGE SCALE MRNA]</scope>
    <source>
        <tissue>Embryo</tissue>
    </source>
</reference>
<keyword id="KW-0966">Cell projection</keyword>
<keyword id="KW-0969">Cilium</keyword>
<keyword id="KW-0970">Cilium biogenesis/degradation</keyword>
<keyword id="KW-0963">Cytoplasm</keyword>
<keyword id="KW-0206">Cytoskeleton</keyword>
<keyword id="KW-1185">Reference proteome</keyword>